<proteinExistence type="inferred from homology"/>
<comment type="function">
    <text evidence="2">Protease subunit of a proteasome-like degradation complex believed to be a general protein degrading machinery.</text>
</comment>
<comment type="catalytic activity">
    <reaction evidence="2">
        <text>ATP-dependent cleavage of peptide bonds with broad specificity.</text>
        <dbReference type="EC" id="3.4.25.2"/>
    </reaction>
</comment>
<comment type="activity regulation">
    <text evidence="2">Allosterically activated by HslU binding.</text>
</comment>
<comment type="subunit">
    <text evidence="2">A double ring-shaped homohexamer of HslV is capped on each side by a ring-shaped HslU homohexamer. The assembly of the HslU/HslV complex is dependent on binding of ATP.</text>
</comment>
<comment type="subcellular location">
    <subcellularLocation>
        <location evidence="2">Cytoplasm</location>
    </subcellularLocation>
</comment>
<comment type="similarity">
    <text evidence="2">Belongs to the peptidase T1B family. HslV subfamily.</text>
</comment>
<gene>
    <name evidence="2" type="primary">hslV</name>
</gene>
<sequence length="177" mass="18936">MTTICSVKYNGQTAIAGDGQVTLGKSIIAKTTAKKIRRIYHDQVVIGFAGGVADAVSLQEMLEGKLESYSGDLRRAAVEMAQSWRKDQTLQKLEAMVIAFNDQDLLLISGNGEVLEPDESVVAIGSGGYYAQAAAVGMLRHASGMTASEIAKEAVNIAADIDVFTDHEIVTDEIEEK</sequence>
<keyword id="KW-0021">Allosteric enzyme</keyword>
<keyword id="KW-0963">Cytoplasm</keyword>
<keyword id="KW-0378">Hydrolase</keyword>
<keyword id="KW-0479">Metal-binding</keyword>
<keyword id="KW-0645">Protease</keyword>
<keyword id="KW-0915">Sodium</keyword>
<keyword id="KW-0888">Threonine protease</keyword>
<dbReference type="EC" id="3.4.25.2" evidence="2"/>
<dbReference type="EMBL" id="X84261">
    <property type="protein sequence ID" value="CAA59019.1"/>
    <property type="molecule type" value="Genomic_DNA"/>
</dbReference>
<dbReference type="RefSeq" id="WP_013439704.1">
    <property type="nucleotide sequence ID" value="NZ_QOCY01000053.1"/>
</dbReference>
<dbReference type="SMR" id="Q48734"/>
<dbReference type="GO" id="GO:0009376">
    <property type="term" value="C:HslUV protease complex"/>
    <property type="evidence" value="ECO:0007669"/>
    <property type="project" value="UniProtKB-UniRule"/>
</dbReference>
<dbReference type="GO" id="GO:0005839">
    <property type="term" value="C:proteasome core complex"/>
    <property type="evidence" value="ECO:0007669"/>
    <property type="project" value="InterPro"/>
</dbReference>
<dbReference type="GO" id="GO:0046872">
    <property type="term" value="F:metal ion binding"/>
    <property type="evidence" value="ECO:0007669"/>
    <property type="project" value="UniProtKB-KW"/>
</dbReference>
<dbReference type="GO" id="GO:0004298">
    <property type="term" value="F:threonine-type endopeptidase activity"/>
    <property type="evidence" value="ECO:0007669"/>
    <property type="project" value="UniProtKB-KW"/>
</dbReference>
<dbReference type="GO" id="GO:0051603">
    <property type="term" value="P:proteolysis involved in protein catabolic process"/>
    <property type="evidence" value="ECO:0007669"/>
    <property type="project" value="InterPro"/>
</dbReference>
<dbReference type="CDD" id="cd01913">
    <property type="entry name" value="protease_HslV"/>
    <property type="match status" value="1"/>
</dbReference>
<dbReference type="Gene3D" id="3.60.20.10">
    <property type="entry name" value="Glutamine Phosphoribosylpyrophosphate, subunit 1, domain 1"/>
    <property type="match status" value="1"/>
</dbReference>
<dbReference type="HAMAP" id="MF_00248">
    <property type="entry name" value="HslV"/>
    <property type="match status" value="1"/>
</dbReference>
<dbReference type="InterPro" id="IPR022281">
    <property type="entry name" value="ATP-dep_Prtase_HsIV_su"/>
</dbReference>
<dbReference type="InterPro" id="IPR029055">
    <property type="entry name" value="Ntn_hydrolases_N"/>
</dbReference>
<dbReference type="InterPro" id="IPR001353">
    <property type="entry name" value="Proteasome_sua/b"/>
</dbReference>
<dbReference type="InterPro" id="IPR023333">
    <property type="entry name" value="Proteasome_suB-type"/>
</dbReference>
<dbReference type="NCBIfam" id="TIGR03692">
    <property type="entry name" value="ATP_dep_HslV"/>
    <property type="match status" value="1"/>
</dbReference>
<dbReference type="NCBIfam" id="NF003964">
    <property type="entry name" value="PRK05456.1"/>
    <property type="match status" value="1"/>
</dbReference>
<dbReference type="PANTHER" id="PTHR32194:SF0">
    <property type="entry name" value="ATP-DEPENDENT PROTEASE SUBUNIT HSLV"/>
    <property type="match status" value="1"/>
</dbReference>
<dbReference type="PANTHER" id="PTHR32194">
    <property type="entry name" value="METALLOPROTEASE TLDD"/>
    <property type="match status" value="1"/>
</dbReference>
<dbReference type="Pfam" id="PF00227">
    <property type="entry name" value="Proteasome"/>
    <property type="match status" value="1"/>
</dbReference>
<dbReference type="SUPFAM" id="SSF56235">
    <property type="entry name" value="N-terminal nucleophile aminohydrolases (Ntn hydrolases)"/>
    <property type="match status" value="1"/>
</dbReference>
<dbReference type="PROSITE" id="PS51476">
    <property type="entry name" value="PROTEASOME_BETA_2"/>
    <property type="match status" value="1"/>
</dbReference>
<reference key="1">
    <citation type="journal article" date="1996" name="Curr. Microbiol.">
        <title>Molecular characterization of the xerC gene of Lactobacillus leichmannii encoding a site-specific recombinase and two adjacent heat shock genes.</title>
        <authorList>
            <person name="Becker J."/>
            <person name="Brendel M."/>
        </authorList>
    </citation>
    <scope>NUCLEOTIDE SEQUENCE [GENOMIC DNA]</scope>
    <source>
        <strain>ATCC 4797 / DSM 20076 / BCRC 10699 / JCM 1148 / NBRC 3073 / NCIMB 7854 / 326 / F59</strain>
    </source>
</reference>
<feature type="initiator methionine" description="Removed" evidence="1">
    <location>
        <position position="1"/>
    </location>
</feature>
<feature type="chain" id="PRO_0000148115" description="ATP-dependent protease subunit HslV">
    <location>
        <begin position="2"/>
        <end position="177"/>
    </location>
</feature>
<feature type="active site" evidence="2">
    <location>
        <position position="2"/>
    </location>
</feature>
<feature type="binding site" evidence="2">
    <location>
        <position position="159"/>
    </location>
    <ligand>
        <name>Na(+)</name>
        <dbReference type="ChEBI" id="CHEBI:29101"/>
    </ligand>
</feature>
<feature type="binding site" evidence="2">
    <location>
        <position position="162"/>
    </location>
    <ligand>
        <name>Na(+)</name>
        <dbReference type="ChEBI" id="CHEBI:29101"/>
    </ligand>
</feature>
<feature type="binding site" evidence="2">
    <location>
        <position position="165"/>
    </location>
    <ligand>
        <name>Na(+)</name>
        <dbReference type="ChEBI" id="CHEBI:29101"/>
    </ligand>
</feature>
<evidence type="ECO:0000250" key="1"/>
<evidence type="ECO:0000255" key="2">
    <source>
        <dbReference type="HAMAP-Rule" id="MF_00248"/>
    </source>
</evidence>
<name>HSLV_LACLE</name>
<organism>
    <name type="scientific">Lactobacillus leichmannii</name>
    <dbReference type="NCBI Taxonomy" id="28039"/>
    <lineage>
        <taxon>Bacteria</taxon>
        <taxon>Bacillati</taxon>
        <taxon>Bacillota</taxon>
        <taxon>Bacilli</taxon>
        <taxon>Lactobacillales</taxon>
        <taxon>Lactobacillaceae</taxon>
        <taxon>Lactobacillus</taxon>
    </lineage>
</organism>
<accession>Q48734</accession>
<protein>
    <recommendedName>
        <fullName evidence="2">ATP-dependent protease subunit HslV</fullName>
        <ecNumber evidence="2">3.4.25.2</ecNumber>
    </recommendedName>
</protein>